<organism>
    <name type="scientific">Escherichia coli O6:K15:H31 (strain 536 / UPEC)</name>
    <dbReference type="NCBI Taxonomy" id="362663"/>
    <lineage>
        <taxon>Bacteria</taxon>
        <taxon>Pseudomonadati</taxon>
        <taxon>Pseudomonadota</taxon>
        <taxon>Gammaproteobacteria</taxon>
        <taxon>Enterobacterales</taxon>
        <taxon>Enterobacteriaceae</taxon>
        <taxon>Escherichia</taxon>
    </lineage>
</organism>
<dbReference type="EC" id="1.17.7.4" evidence="1"/>
<dbReference type="EMBL" id="CP000247">
    <property type="protein sequence ID" value="ABG68069.1"/>
    <property type="molecule type" value="Genomic_DNA"/>
</dbReference>
<dbReference type="SMR" id="Q0TLW2"/>
<dbReference type="KEGG" id="ecp:ECP_0027"/>
<dbReference type="HOGENOM" id="CLU_027486_1_0_6"/>
<dbReference type="UniPathway" id="UPA00056">
    <property type="reaction ID" value="UER00097"/>
</dbReference>
<dbReference type="UniPathway" id="UPA00059">
    <property type="reaction ID" value="UER00105"/>
</dbReference>
<dbReference type="Proteomes" id="UP000009182">
    <property type="component" value="Chromosome"/>
</dbReference>
<dbReference type="GO" id="GO:0051539">
    <property type="term" value="F:4 iron, 4 sulfur cluster binding"/>
    <property type="evidence" value="ECO:0007669"/>
    <property type="project" value="UniProtKB-UniRule"/>
</dbReference>
<dbReference type="GO" id="GO:0051745">
    <property type="term" value="F:4-hydroxy-3-methylbut-2-enyl diphosphate reductase activity"/>
    <property type="evidence" value="ECO:0007669"/>
    <property type="project" value="UniProtKB-UniRule"/>
</dbReference>
<dbReference type="GO" id="GO:0046872">
    <property type="term" value="F:metal ion binding"/>
    <property type="evidence" value="ECO:0007669"/>
    <property type="project" value="UniProtKB-KW"/>
</dbReference>
<dbReference type="GO" id="GO:0050992">
    <property type="term" value="P:dimethylallyl diphosphate biosynthetic process"/>
    <property type="evidence" value="ECO:0007669"/>
    <property type="project" value="UniProtKB-UniRule"/>
</dbReference>
<dbReference type="GO" id="GO:0019288">
    <property type="term" value="P:isopentenyl diphosphate biosynthetic process, methylerythritol 4-phosphate pathway"/>
    <property type="evidence" value="ECO:0007669"/>
    <property type="project" value="UniProtKB-UniRule"/>
</dbReference>
<dbReference type="GO" id="GO:0016114">
    <property type="term" value="P:terpenoid biosynthetic process"/>
    <property type="evidence" value="ECO:0007669"/>
    <property type="project" value="UniProtKB-UniRule"/>
</dbReference>
<dbReference type="CDD" id="cd13944">
    <property type="entry name" value="lytB_ispH"/>
    <property type="match status" value="1"/>
</dbReference>
<dbReference type="FunFam" id="3.40.1010.20:FF:000001">
    <property type="entry name" value="4-hydroxy-3-methylbut-2-enyl diphosphate reductase"/>
    <property type="match status" value="1"/>
</dbReference>
<dbReference type="FunFam" id="3.40.50.11270:FF:000001">
    <property type="entry name" value="4-hydroxy-3-methylbut-2-enyl diphosphate reductase"/>
    <property type="match status" value="1"/>
</dbReference>
<dbReference type="Gene3D" id="3.40.50.11270">
    <property type="match status" value="1"/>
</dbReference>
<dbReference type="Gene3D" id="3.40.1010.20">
    <property type="entry name" value="4-hydroxy-3-methylbut-2-enyl diphosphate reductase, catalytic domain"/>
    <property type="match status" value="2"/>
</dbReference>
<dbReference type="HAMAP" id="MF_00191">
    <property type="entry name" value="IspH"/>
    <property type="match status" value="1"/>
</dbReference>
<dbReference type="InterPro" id="IPR003451">
    <property type="entry name" value="LytB/IspH"/>
</dbReference>
<dbReference type="NCBIfam" id="TIGR00216">
    <property type="entry name" value="ispH_lytB"/>
    <property type="match status" value="1"/>
</dbReference>
<dbReference type="NCBIfam" id="NF002188">
    <property type="entry name" value="PRK01045.1-2"/>
    <property type="match status" value="1"/>
</dbReference>
<dbReference type="NCBIfam" id="NF002190">
    <property type="entry name" value="PRK01045.1-4"/>
    <property type="match status" value="1"/>
</dbReference>
<dbReference type="PANTHER" id="PTHR30426">
    <property type="entry name" value="4-HYDROXY-3-METHYLBUT-2-ENYL DIPHOSPHATE REDUCTASE"/>
    <property type="match status" value="1"/>
</dbReference>
<dbReference type="PANTHER" id="PTHR30426:SF0">
    <property type="entry name" value="4-HYDROXY-3-METHYLBUT-2-ENYL DIPHOSPHATE REDUCTASE"/>
    <property type="match status" value="1"/>
</dbReference>
<dbReference type="Pfam" id="PF02401">
    <property type="entry name" value="LYTB"/>
    <property type="match status" value="1"/>
</dbReference>
<accession>Q0TLW2</accession>
<comment type="function">
    <text evidence="1">Catalyzes the conversion of 1-hydroxy-2-methyl-2-(E)-butenyl 4-diphosphate (HMBPP) into a mixture of isopentenyl diphosphate (IPP) and dimethylallyl diphosphate (DMAPP). Acts in the terminal step of the DOXP/MEP pathway for isoprenoid precursor biosynthesis.</text>
</comment>
<comment type="catalytic activity">
    <reaction evidence="1">
        <text>isopentenyl diphosphate + 2 oxidized [2Fe-2S]-[ferredoxin] + H2O = (2E)-4-hydroxy-3-methylbut-2-enyl diphosphate + 2 reduced [2Fe-2S]-[ferredoxin] + 2 H(+)</text>
        <dbReference type="Rhea" id="RHEA:24488"/>
        <dbReference type="Rhea" id="RHEA-COMP:10000"/>
        <dbReference type="Rhea" id="RHEA-COMP:10001"/>
        <dbReference type="ChEBI" id="CHEBI:15377"/>
        <dbReference type="ChEBI" id="CHEBI:15378"/>
        <dbReference type="ChEBI" id="CHEBI:33737"/>
        <dbReference type="ChEBI" id="CHEBI:33738"/>
        <dbReference type="ChEBI" id="CHEBI:128753"/>
        <dbReference type="ChEBI" id="CHEBI:128769"/>
        <dbReference type="EC" id="1.17.7.4"/>
    </reaction>
</comment>
<comment type="catalytic activity">
    <reaction evidence="1">
        <text>dimethylallyl diphosphate + 2 oxidized [2Fe-2S]-[ferredoxin] + H2O = (2E)-4-hydroxy-3-methylbut-2-enyl diphosphate + 2 reduced [2Fe-2S]-[ferredoxin] + 2 H(+)</text>
        <dbReference type="Rhea" id="RHEA:24825"/>
        <dbReference type="Rhea" id="RHEA-COMP:10000"/>
        <dbReference type="Rhea" id="RHEA-COMP:10001"/>
        <dbReference type="ChEBI" id="CHEBI:15377"/>
        <dbReference type="ChEBI" id="CHEBI:15378"/>
        <dbReference type="ChEBI" id="CHEBI:33737"/>
        <dbReference type="ChEBI" id="CHEBI:33738"/>
        <dbReference type="ChEBI" id="CHEBI:57623"/>
        <dbReference type="ChEBI" id="CHEBI:128753"/>
        <dbReference type="EC" id="1.17.7.4"/>
    </reaction>
</comment>
<comment type="cofactor">
    <cofactor evidence="1">
        <name>[4Fe-4S] cluster</name>
        <dbReference type="ChEBI" id="CHEBI:49883"/>
    </cofactor>
    <text evidence="1">Binds 1 [4Fe-4S] cluster per subunit.</text>
</comment>
<comment type="pathway">
    <text evidence="1">Isoprenoid biosynthesis; dimethylallyl diphosphate biosynthesis; dimethylallyl diphosphate from (2E)-4-hydroxy-3-methylbutenyl diphosphate: step 1/1.</text>
</comment>
<comment type="pathway">
    <text evidence="1">Isoprenoid biosynthesis; isopentenyl diphosphate biosynthesis via DXP pathway; isopentenyl diphosphate from 1-deoxy-D-xylulose 5-phosphate: step 6/6.</text>
</comment>
<comment type="subunit">
    <text evidence="1">Homodimer.</text>
</comment>
<comment type="similarity">
    <text evidence="1">Belongs to the IspH family.</text>
</comment>
<sequence>MQILLANPRGFCAGVDRAISIVENALAIYGAPIYVRHEVVHNRYVVDSLRERGAIFIEQISEVPDGAILIFSAHGVSQAVRNEAKSRDLTVFDATCPLVTKVHMEVARASRRGEESILIGHAGHPEVEGTMGQYSNPEGGMYLVESPDDVWKLTVKNEEKLSFMTQTTLSVDDTSDVIDALRKRFPKIVGPRKDDICYATTNRQEAVRALAEQAEVVLVVGSKNSSNSNRLAELAQRMGKRAFLIDDATDIQEEWVKEAKCVGVTAGASAPDILVQNVVARLRSLAVAKPFRWKAAKKISFSKCRKSCESIFVKSIKSLAA</sequence>
<feature type="chain" id="PRO_1000021117" description="4-hydroxy-3-methylbut-2-enyl diphosphate reductase">
    <location>
        <begin position="1"/>
        <end position="321"/>
    </location>
</feature>
<feature type="active site" description="Proton donor" evidence="1">
    <location>
        <position position="126"/>
    </location>
</feature>
<feature type="binding site" evidence="1">
    <location>
        <position position="12"/>
    </location>
    <ligand>
        <name>[4Fe-4S] cluster</name>
        <dbReference type="ChEBI" id="CHEBI:49883"/>
    </ligand>
</feature>
<feature type="binding site" evidence="1">
    <location>
        <position position="41"/>
    </location>
    <ligand>
        <name>(2E)-4-hydroxy-3-methylbut-2-enyl diphosphate</name>
        <dbReference type="ChEBI" id="CHEBI:128753"/>
    </ligand>
</feature>
<feature type="binding site" evidence="1">
    <location>
        <position position="41"/>
    </location>
    <ligand>
        <name>dimethylallyl diphosphate</name>
        <dbReference type="ChEBI" id="CHEBI:57623"/>
    </ligand>
</feature>
<feature type="binding site" evidence="1">
    <location>
        <position position="41"/>
    </location>
    <ligand>
        <name>isopentenyl diphosphate</name>
        <dbReference type="ChEBI" id="CHEBI:128769"/>
    </ligand>
</feature>
<feature type="binding site" evidence="1">
    <location>
        <position position="74"/>
    </location>
    <ligand>
        <name>(2E)-4-hydroxy-3-methylbut-2-enyl diphosphate</name>
        <dbReference type="ChEBI" id="CHEBI:128753"/>
    </ligand>
</feature>
<feature type="binding site" evidence="1">
    <location>
        <position position="74"/>
    </location>
    <ligand>
        <name>dimethylallyl diphosphate</name>
        <dbReference type="ChEBI" id="CHEBI:57623"/>
    </ligand>
</feature>
<feature type="binding site" evidence="1">
    <location>
        <position position="74"/>
    </location>
    <ligand>
        <name>isopentenyl diphosphate</name>
        <dbReference type="ChEBI" id="CHEBI:128769"/>
    </ligand>
</feature>
<feature type="binding site" evidence="1">
    <location>
        <position position="96"/>
    </location>
    <ligand>
        <name>[4Fe-4S] cluster</name>
        <dbReference type="ChEBI" id="CHEBI:49883"/>
    </ligand>
</feature>
<feature type="binding site" evidence="1">
    <location>
        <position position="124"/>
    </location>
    <ligand>
        <name>(2E)-4-hydroxy-3-methylbut-2-enyl diphosphate</name>
        <dbReference type="ChEBI" id="CHEBI:128753"/>
    </ligand>
</feature>
<feature type="binding site" evidence="1">
    <location>
        <position position="124"/>
    </location>
    <ligand>
        <name>dimethylallyl diphosphate</name>
        <dbReference type="ChEBI" id="CHEBI:57623"/>
    </ligand>
</feature>
<feature type="binding site" evidence="1">
    <location>
        <position position="124"/>
    </location>
    <ligand>
        <name>isopentenyl diphosphate</name>
        <dbReference type="ChEBI" id="CHEBI:128769"/>
    </ligand>
</feature>
<feature type="binding site" evidence="1">
    <location>
        <position position="167"/>
    </location>
    <ligand>
        <name>(2E)-4-hydroxy-3-methylbut-2-enyl diphosphate</name>
        <dbReference type="ChEBI" id="CHEBI:128753"/>
    </ligand>
</feature>
<feature type="binding site" evidence="1">
    <location>
        <position position="197"/>
    </location>
    <ligand>
        <name>[4Fe-4S] cluster</name>
        <dbReference type="ChEBI" id="CHEBI:49883"/>
    </ligand>
</feature>
<feature type="binding site" evidence="1">
    <location>
        <position position="225"/>
    </location>
    <ligand>
        <name>(2E)-4-hydroxy-3-methylbut-2-enyl diphosphate</name>
        <dbReference type="ChEBI" id="CHEBI:128753"/>
    </ligand>
</feature>
<feature type="binding site" evidence="1">
    <location>
        <position position="225"/>
    </location>
    <ligand>
        <name>dimethylallyl diphosphate</name>
        <dbReference type="ChEBI" id="CHEBI:57623"/>
    </ligand>
</feature>
<feature type="binding site" evidence="1">
    <location>
        <position position="225"/>
    </location>
    <ligand>
        <name>isopentenyl diphosphate</name>
        <dbReference type="ChEBI" id="CHEBI:128769"/>
    </ligand>
</feature>
<feature type="binding site" evidence="1">
    <location>
        <position position="226"/>
    </location>
    <ligand>
        <name>(2E)-4-hydroxy-3-methylbut-2-enyl diphosphate</name>
        <dbReference type="ChEBI" id="CHEBI:128753"/>
    </ligand>
</feature>
<feature type="binding site" evidence="1">
    <location>
        <position position="226"/>
    </location>
    <ligand>
        <name>dimethylallyl diphosphate</name>
        <dbReference type="ChEBI" id="CHEBI:57623"/>
    </ligand>
</feature>
<feature type="binding site" evidence="1">
    <location>
        <position position="226"/>
    </location>
    <ligand>
        <name>isopentenyl diphosphate</name>
        <dbReference type="ChEBI" id="CHEBI:128769"/>
    </ligand>
</feature>
<feature type="binding site" evidence="1">
    <location>
        <position position="227"/>
    </location>
    <ligand>
        <name>(2E)-4-hydroxy-3-methylbut-2-enyl diphosphate</name>
        <dbReference type="ChEBI" id="CHEBI:128753"/>
    </ligand>
</feature>
<feature type="binding site" evidence="1">
    <location>
        <position position="227"/>
    </location>
    <ligand>
        <name>dimethylallyl diphosphate</name>
        <dbReference type="ChEBI" id="CHEBI:57623"/>
    </ligand>
</feature>
<feature type="binding site" evidence="1">
    <location>
        <position position="227"/>
    </location>
    <ligand>
        <name>isopentenyl diphosphate</name>
        <dbReference type="ChEBI" id="CHEBI:128769"/>
    </ligand>
</feature>
<feature type="binding site" evidence="1">
    <location>
        <position position="269"/>
    </location>
    <ligand>
        <name>(2E)-4-hydroxy-3-methylbut-2-enyl diphosphate</name>
        <dbReference type="ChEBI" id="CHEBI:128753"/>
    </ligand>
</feature>
<feature type="binding site" evidence="1">
    <location>
        <position position="269"/>
    </location>
    <ligand>
        <name>dimethylallyl diphosphate</name>
        <dbReference type="ChEBI" id="CHEBI:57623"/>
    </ligand>
</feature>
<feature type="binding site" evidence="1">
    <location>
        <position position="269"/>
    </location>
    <ligand>
        <name>isopentenyl diphosphate</name>
        <dbReference type="ChEBI" id="CHEBI:128769"/>
    </ligand>
</feature>
<name>ISPH_ECOL5</name>
<evidence type="ECO:0000255" key="1">
    <source>
        <dbReference type="HAMAP-Rule" id="MF_00191"/>
    </source>
</evidence>
<keyword id="KW-0004">4Fe-4S</keyword>
<keyword id="KW-0408">Iron</keyword>
<keyword id="KW-0411">Iron-sulfur</keyword>
<keyword id="KW-0414">Isoprene biosynthesis</keyword>
<keyword id="KW-0479">Metal-binding</keyword>
<keyword id="KW-0560">Oxidoreductase</keyword>
<protein>
    <recommendedName>
        <fullName evidence="1">4-hydroxy-3-methylbut-2-enyl diphosphate reductase</fullName>
        <shortName evidence="1">HMBPP reductase</shortName>
        <ecNumber evidence="1">1.17.7.4</ecNumber>
    </recommendedName>
</protein>
<proteinExistence type="inferred from homology"/>
<reference key="1">
    <citation type="journal article" date="2006" name="Mol. Microbiol.">
        <title>Role of pathogenicity island-associated integrases in the genome plasticity of uropathogenic Escherichia coli strain 536.</title>
        <authorList>
            <person name="Hochhut B."/>
            <person name="Wilde C."/>
            <person name="Balling G."/>
            <person name="Middendorf B."/>
            <person name="Dobrindt U."/>
            <person name="Brzuszkiewicz E."/>
            <person name="Gottschalk G."/>
            <person name="Carniel E."/>
            <person name="Hacker J."/>
        </authorList>
    </citation>
    <scope>NUCLEOTIDE SEQUENCE [LARGE SCALE GENOMIC DNA]</scope>
    <source>
        <strain>536 / UPEC</strain>
    </source>
</reference>
<gene>
    <name evidence="1" type="primary">ispH</name>
    <name type="ordered locus">ECP_0027</name>
</gene>